<dbReference type="EC" id="6.3.2.2" evidence="1"/>
<dbReference type="EMBL" id="CP000518">
    <property type="protein sequence ID" value="ABL93651.1"/>
    <property type="molecule type" value="Genomic_DNA"/>
</dbReference>
<dbReference type="SMR" id="A1ULE3"/>
<dbReference type="STRING" id="189918.Mkms_4460"/>
<dbReference type="KEGG" id="mkm:Mkms_4460"/>
<dbReference type="HOGENOM" id="CLU_044848_0_0_11"/>
<dbReference type="OrthoDB" id="9803842at2"/>
<dbReference type="GO" id="GO:0005524">
    <property type="term" value="F:ATP binding"/>
    <property type="evidence" value="ECO:0007669"/>
    <property type="project" value="UniProtKB-KW"/>
</dbReference>
<dbReference type="GO" id="GO:0004357">
    <property type="term" value="F:glutamate-cysteine ligase activity"/>
    <property type="evidence" value="ECO:0007669"/>
    <property type="project" value="UniProtKB-EC"/>
</dbReference>
<dbReference type="GO" id="GO:0042398">
    <property type="term" value="P:modified amino acid biosynthetic process"/>
    <property type="evidence" value="ECO:0007669"/>
    <property type="project" value="InterPro"/>
</dbReference>
<dbReference type="Gene3D" id="3.30.590.20">
    <property type="match status" value="1"/>
</dbReference>
<dbReference type="HAMAP" id="MF_01609">
    <property type="entry name" value="Glu_cys_ligase_2"/>
    <property type="match status" value="1"/>
</dbReference>
<dbReference type="InterPro" id="IPR050141">
    <property type="entry name" value="GCL_type2/YbdK_subfam"/>
</dbReference>
<dbReference type="InterPro" id="IPR006336">
    <property type="entry name" value="GCS2"/>
</dbReference>
<dbReference type="InterPro" id="IPR014746">
    <property type="entry name" value="Gln_synth/guanido_kin_cat_dom"/>
</dbReference>
<dbReference type="InterPro" id="IPR011793">
    <property type="entry name" value="YbdK"/>
</dbReference>
<dbReference type="NCBIfam" id="TIGR02050">
    <property type="entry name" value="gshA_cyan_rel"/>
    <property type="match status" value="1"/>
</dbReference>
<dbReference type="NCBIfam" id="NF010041">
    <property type="entry name" value="PRK13517.1-1"/>
    <property type="match status" value="1"/>
</dbReference>
<dbReference type="PANTHER" id="PTHR36510">
    <property type="entry name" value="GLUTAMATE--CYSTEINE LIGASE 2-RELATED"/>
    <property type="match status" value="1"/>
</dbReference>
<dbReference type="PANTHER" id="PTHR36510:SF1">
    <property type="entry name" value="GLUTAMATE--CYSTEINE LIGASE 2-RELATED"/>
    <property type="match status" value="1"/>
</dbReference>
<dbReference type="Pfam" id="PF04107">
    <property type="entry name" value="GCS2"/>
    <property type="match status" value="1"/>
</dbReference>
<dbReference type="SUPFAM" id="SSF55931">
    <property type="entry name" value="Glutamine synthetase/guanido kinase"/>
    <property type="match status" value="1"/>
</dbReference>
<organism>
    <name type="scientific">Mycobacterium sp. (strain KMS)</name>
    <dbReference type="NCBI Taxonomy" id="189918"/>
    <lineage>
        <taxon>Bacteria</taxon>
        <taxon>Bacillati</taxon>
        <taxon>Actinomycetota</taxon>
        <taxon>Actinomycetes</taxon>
        <taxon>Mycobacteriales</taxon>
        <taxon>Mycobacteriaceae</taxon>
        <taxon>Mycobacterium</taxon>
    </lineage>
</organism>
<proteinExistence type="inferred from homology"/>
<evidence type="ECO:0000255" key="1">
    <source>
        <dbReference type="HAMAP-Rule" id="MF_01609"/>
    </source>
</evidence>
<protein>
    <recommendedName>
        <fullName evidence="1">Putative glutamate--cysteine ligase 2-2</fullName>
        <ecNumber evidence="1">6.3.2.2</ecNumber>
    </recommendedName>
    <alternativeName>
        <fullName evidence="1">Gamma-glutamylcysteine synthetase 2-2</fullName>
        <shortName evidence="1">GCS 2-2</shortName>
        <shortName evidence="1">Gamma-GCS 2-2</shortName>
    </alternativeName>
</protein>
<comment type="function">
    <text evidence="1">ATP-dependent carboxylate-amine ligase which exhibits weak glutamate--cysteine ligase activity.</text>
</comment>
<comment type="catalytic activity">
    <reaction evidence="1">
        <text>L-cysteine + L-glutamate + ATP = gamma-L-glutamyl-L-cysteine + ADP + phosphate + H(+)</text>
        <dbReference type="Rhea" id="RHEA:13285"/>
        <dbReference type="ChEBI" id="CHEBI:15378"/>
        <dbReference type="ChEBI" id="CHEBI:29985"/>
        <dbReference type="ChEBI" id="CHEBI:30616"/>
        <dbReference type="ChEBI" id="CHEBI:35235"/>
        <dbReference type="ChEBI" id="CHEBI:43474"/>
        <dbReference type="ChEBI" id="CHEBI:58173"/>
        <dbReference type="ChEBI" id="CHEBI:456216"/>
        <dbReference type="EC" id="6.3.2.2"/>
    </reaction>
</comment>
<comment type="similarity">
    <text evidence="1">Belongs to the glutamate--cysteine ligase type 2 family. YbdK subfamily.</text>
</comment>
<name>GCS22_MYCSK</name>
<reference key="1">
    <citation type="submission" date="2006-12" db="EMBL/GenBank/DDBJ databases">
        <title>Complete sequence of chromosome of Mycobacterium sp. KMS.</title>
        <authorList>
            <consortium name="US DOE Joint Genome Institute"/>
            <person name="Copeland A."/>
            <person name="Lucas S."/>
            <person name="Lapidus A."/>
            <person name="Barry K."/>
            <person name="Detter J.C."/>
            <person name="Glavina del Rio T."/>
            <person name="Hammon N."/>
            <person name="Israni S."/>
            <person name="Dalin E."/>
            <person name="Tice H."/>
            <person name="Pitluck S."/>
            <person name="Kiss H."/>
            <person name="Brettin T."/>
            <person name="Bruce D."/>
            <person name="Han C."/>
            <person name="Tapia R."/>
            <person name="Gilna P."/>
            <person name="Schmutz J."/>
            <person name="Larimer F."/>
            <person name="Land M."/>
            <person name="Hauser L."/>
            <person name="Kyrpides N."/>
            <person name="Mikhailova N."/>
            <person name="Miller C.D."/>
            <person name="Richardson P."/>
        </authorList>
    </citation>
    <scope>NUCLEOTIDE SEQUENCE [LARGE SCALE GENOMIC DNA]</scope>
    <source>
        <strain>KMS</strain>
    </source>
</reference>
<feature type="chain" id="PRO_0000291498" description="Putative glutamate--cysteine ligase 2-2">
    <location>
        <begin position="1"/>
        <end position="364"/>
    </location>
</feature>
<accession>A1ULE3</accession>
<sequence>MAAHPTVGVEEEFLLVDPDSGAPIARNRDVARHAADRGVDLQLELTSCQVETATGVASSMADVREQLTHLRSTVARAADDSGARLLAVAVPPTVPHEFPVTDNPRYHRIAERFGMLAREQGICGAHVHVAVPTREVAIRVSNRLRPWLPVLLALTANSAIYRNADSGYASWRRMLWARWPSAGPPPHFDSADEFDAMVRMLLQSGAMLDEGQVYWDVRPSADFPTIEVRVADVPATVADTVLFAAIVRATVMTLLGDERDGAGVPRISAHALDAAYWRSARDGLDGIAIDLAESHAPMPARDLLGVLVDRITPALRAVGDHDLVRDGLARLDDEGNGAMRQRAAWRRRGEIADVIDAVAEATLA</sequence>
<gene>
    <name type="ordered locus">Mkms_4460</name>
</gene>
<keyword id="KW-0067">ATP-binding</keyword>
<keyword id="KW-0436">Ligase</keyword>
<keyword id="KW-0547">Nucleotide-binding</keyword>